<accession>B7LPT3</accession>
<protein>
    <recommendedName>
        <fullName evidence="1">Membrane-bound lytic murein transglycosylase C</fullName>
        <ecNumber evidence="1">4.2.2.n1</ecNumber>
    </recommendedName>
    <alternativeName>
        <fullName evidence="1">Murein lyase C</fullName>
    </alternativeName>
</protein>
<comment type="function">
    <text evidence="1">Murein-degrading enzyme. May play a role in recycling of muropeptides during cell elongation and/or cell division.</text>
</comment>
<comment type="catalytic activity">
    <reaction evidence="1">
        <text>Exolytic cleavage of the (1-&gt;4)-beta-glycosidic linkage between N-acetylmuramic acid (MurNAc) and N-acetylglucosamine (GlcNAc) residues in peptidoglycan, from either the reducing or the non-reducing ends of the peptidoglycan chains, with concomitant formation of a 1,6-anhydrobond in the MurNAc residue.</text>
        <dbReference type="EC" id="4.2.2.n1"/>
    </reaction>
</comment>
<comment type="subcellular location">
    <subcellularLocation>
        <location evidence="1">Cell outer membrane</location>
        <topology evidence="1">Lipid-anchor</topology>
    </subcellularLocation>
</comment>
<comment type="similarity">
    <text evidence="1">Belongs to the transglycosylase Slt family.</text>
</comment>
<name>MLTC_ESCF3</name>
<dbReference type="EC" id="4.2.2.n1" evidence="1"/>
<dbReference type="EMBL" id="CU928158">
    <property type="protein sequence ID" value="CAQ90398.1"/>
    <property type="molecule type" value="Genomic_DNA"/>
</dbReference>
<dbReference type="RefSeq" id="WP_015953698.1">
    <property type="nucleotide sequence ID" value="NC_011740.1"/>
</dbReference>
<dbReference type="SMR" id="B7LPT3"/>
<dbReference type="CAZy" id="GH23">
    <property type="family name" value="Glycoside Hydrolase Family 23"/>
</dbReference>
<dbReference type="GeneID" id="75060477"/>
<dbReference type="KEGG" id="efe:EFER_2905"/>
<dbReference type="HOGENOM" id="CLU_044583_0_0_6"/>
<dbReference type="OrthoDB" id="5620293at2"/>
<dbReference type="Proteomes" id="UP000000745">
    <property type="component" value="Chromosome"/>
</dbReference>
<dbReference type="GO" id="GO:0009279">
    <property type="term" value="C:cell outer membrane"/>
    <property type="evidence" value="ECO:0007669"/>
    <property type="project" value="UniProtKB-SubCell"/>
</dbReference>
<dbReference type="GO" id="GO:0016798">
    <property type="term" value="F:hydrolase activity, acting on glycosyl bonds"/>
    <property type="evidence" value="ECO:0007669"/>
    <property type="project" value="InterPro"/>
</dbReference>
<dbReference type="GO" id="GO:0008933">
    <property type="term" value="F:peptidoglycan lytic transglycosylase activity"/>
    <property type="evidence" value="ECO:0007669"/>
    <property type="project" value="UniProtKB-UniRule"/>
</dbReference>
<dbReference type="GO" id="GO:0016998">
    <property type="term" value="P:cell wall macromolecule catabolic process"/>
    <property type="evidence" value="ECO:0007669"/>
    <property type="project" value="UniProtKB-UniRule"/>
</dbReference>
<dbReference type="GO" id="GO:0071555">
    <property type="term" value="P:cell wall organization"/>
    <property type="evidence" value="ECO:0007669"/>
    <property type="project" value="UniProtKB-KW"/>
</dbReference>
<dbReference type="GO" id="GO:0000270">
    <property type="term" value="P:peptidoglycan metabolic process"/>
    <property type="evidence" value="ECO:0007669"/>
    <property type="project" value="InterPro"/>
</dbReference>
<dbReference type="CDD" id="cd16893">
    <property type="entry name" value="LT_MltC_MltE"/>
    <property type="match status" value="1"/>
</dbReference>
<dbReference type="FunFam" id="1.10.530.10:FF:000002">
    <property type="entry name" value="Membrane-bound lytic murein transglycosylase C"/>
    <property type="match status" value="1"/>
</dbReference>
<dbReference type="Gene3D" id="1.10.530.10">
    <property type="match status" value="1"/>
</dbReference>
<dbReference type="HAMAP" id="MF_01616">
    <property type="entry name" value="MltC"/>
    <property type="match status" value="1"/>
</dbReference>
<dbReference type="InterPro" id="IPR023346">
    <property type="entry name" value="Lysozyme-like_dom_sf"/>
</dbReference>
<dbReference type="InterPro" id="IPR023664">
    <property type="entry name" value="Murein_transglycosylaseC"/>
</dbReference>
<dbReference type="InterPro" id="IPR024570">
    <property type="entry name" value="Murein_transglycosylaseC_N"/>
</dbReference>
<dbReference type="InterPro" id="IPR000189">
    <property type="entry name" value="Transglyc_AS"/>
</dbReference>
<dbReference type="InterPro" id="IPR008258">
    <property type="entry name" value="Transglycosylase_SLT_dom_1"/>
</dbReference>
<dbReference type="NCBIfam" id="NF008670">
    <property type="entry name" value="PRK11671.1"/>
    <property type="match status" value="1"/>
</dbReference>
<dbReference type="PANTHER" id="PTHR37423:SF2">
    <property type="entry name" value="MEMBRANE-BOUND LYTIC MUREIN TRANSGLYCOSYLASE C"/>
    <property type="match status" value="1"/>
</dbReference>
<dbReference type="PANTHER" id="PTHR37423">
    <property type="entry name" value="SOLUBLE LYTIC MUREIN TRANSGLYCOSYLASE-RELATED"/>
    <property type="match status" value="1"/>
</dbReference>
<dbReference type="Pfam" id="PF11873">
    <property type="entry name" value="Mltc_N"/>
    <property type="match status" value="1"/>
</dbReference>
<dbReference type="Pfam" id="PF01464">
    <property type="entry name" value="SLT"/>
    <property type="match status" value="1"/>
</dbReference>
<dbReference type="SUPFAM" id="SSF53955">
    <property type="entry name" value="Lysozyme-like"/>
    <property type="match status" value="1"/>
</dbReference>
<dbReference type="PROSITE" id="PS51257">
    <property type="entry name" value="PROKAR_LIPOPROTEIN"/>
    <property type="match status" value="1"/>
</dbReference>
<dbReference type="PROSITE" id="PS00922">
    <property type="entry name" value="TRANSGLYCOSYLASE"/>
    <property type="match status" value="1"/>
</dbReference>
<proteinExistence type="inferred from homology"/>
<organism>
    <name type="scientific">Escherichia fergusonii (strain ATCC 35469 / DSM 13698 / CCUG 18766 / IAM 14443 / JCM 21226 / LMG 7866 / NBRC 102419 / NCTC 12128 / CDC 0568-73)</name>
    <dbReference type="NCBI Taxonomy" id="585054"/>
    <lineage>
        <taxon>Bacteria</taxon>
        <taxon>Pseudomonadati</taxon>
        <taxon>Pseudomonadota</taxon>
        <taxon>Gammaproteobacteria</taxon>
        <taxon>Enterobacterales</taxon>
        <taxon>Enterobacteriaceae</taxon>
        <taxon>Escherichia</taxon>
    </lineage>
</organism>
<reference key="1">
    <citation type="journal article" date="2009" name="PLoS Genet.">
        <title>Organised genome dynamics in the Escherichia coli species results in highly diverse adaptive paths.</title>
        <authorList>
            <person name="Touchon M."/>
            <person name="Hoede C."/>
            <person name="Tenaillon O."/>
            <person name="Barbe V."/>
            <person name="Baeriswyl S."/>
            <person name="Bidet P."/>
            <person name="Bingen E."/>
            <person name="Bonacorsi S."/>
            <person name="Bouchier C."/>
            <person name="Bouvet O."/>
            <person name="Calteau A."/>
            <person name="Chiapello H."/>
            <person name="Clermont O."/>
            <person name="Cruveiller S."/>
            <person name="Danchin A."/>
            <person name="Diard M."/>
            <person name="Dossat C."/>
            <person name="Karoui M.E."/>
            <person name="Frapy E."/>
            <person name="Garry L."/>
            <person name="Ghigo J.M."/>
            <person name="Gilles A.M."/>
            <person name="Johnson J."/>
            <person name="Le Bouguenec C."/>
            <person name="Lescat M."/>
            <person name="Mangenot S."/>
            <person name="Martinez-Jehanne V."/>
            <person name="Matic I."/>
            <person name="Nassif X."/>
            <person name="Oztas S."/>
            <person name="Petit M.A."/>
            <person name="Pichon C."/>
            <person name="Rouy Z."/>
            <person name="Ruf C.S."/>
            <person name="Schneider D."/>
            <person name="Tourret J."/>
            <person name="Vacherie B."/>
            <person name="Vallenet D."/>
            <person name="Medigue C."/>
            <person name="Rocha E.P.C."/>
            <person name="Denamur E."/>
        </authorList>
    </citation>
    <scope>NUCLEOTIDE SEQUENCE [LARGE SCALE GENOMIC DNA]</scope>
    <source>
        <strain>ATCC 35469 / DSM 13698 / BCRC 15582 / CCUG 18766 / IAM 14443 / JCM 21226 / LMG 7866 / NBRC 102419 / NCTC 12128 / CDC 0568-73</strain>
    </source>
</reference>
<gene>
    <name evidence="1" type="primary">mltC</name>
    <name type="ordered locus">EFER_2905</name>
</gene>
<sequence length="359" mass="40129">MKKYLALALIAPLLISCSTTKKGDTYNEAWVKDTNGFDILMGQFAHNIENIWGFKEVVIAGPKDYVKYTDQYQTRSHINFDDGTITIETIAGTEPAAHLRRAIIKTLLMGDDPSSVDLYSDVDDITISKEPFLYGQVVDNTGQPIRWEGRASNFADYLLKNRLKSRSNGLRIIYSVTINMVPNHLDKRAHKYLGMVRQSSRKYGVDESLILAIMQTESSFNPYAVSRSDALGLMQVVQHTAGKDVFRSQGKSGTPSRSFLFDPASNIDTGTAYLAMLNNVYLGGIDNPTSRRYAVITAYNGGAGSVLRVFSNDKIQAANIINTMTPGDVYQTLTTRHPSAESRRYLYKVNTAQKSYRRR</sequence>
<feature type="signal peptide" evidence="1">
    <location>
        <begin position="1"/>
        <end position="16"/>
    </location>
</feature>
<feature type="chain" id="PRO_1000185928" description="Membrane-bound lytic murein transglycosylase C">
    <location>
        <begin position="17"/>
        <end position="359"/>
    </location>
</feature>
<feature type="lipid moiety-binding region" description="N-palmitoyl cysteine" evidence="1">
    <location>
        <position position="17"/>
    </location>
</feature>
<feature type="lipid moiety-binding region" description="S-diacylglycerol cysteine" evidence="1">
    <location>
        <position position="17"/>
    </location>
</feature>
<evidence type="ECO:0000255" key="1">
    <source>
        <dbReference type="HAMAP-Rule" id="MF_01616"/>
    </source>
</evidence>
<keyword id="KW-0998">Cell outer membrane</keyword>
<keyword id="KW-0961">Cell wall biogenesis/degradation</keyword>
<keyword id="KW-0449">Lipoprotein</keyword>
<keyword id="KW-0456">Lyase</keyword>
<keyword id="KW-0472">Membrane</keyword>
<keyword id="KW-0564">Palmitate</keyword>
<keyword id="KW-0732">Signal</keyword>